<accession>Q729T9</accession>
<proteinExistence type="inferred from homology"/>
<feature type="chain" id="PRO_0000155492" description="Ribosomal RNA large subunit methyltransferase E">
    <location>
        <begin position="1"/>
        <end position="204"/>
    </location>
</feature>
<feature type="active site" description="Proton acceptor" evidence="1">
    <location>
        <position position="151"/>
    </location>
</feature>
<feature type="binding site" evidence="1">
    <location>
        <position position="49"/>
    </location>
    <ligand>
        <name>S-adenosyl-L-methionine</name>
        <dbReference type="ChEBI" id="CHEBI:59789"/>
    </ligand>
</feature>
<feature type="binding site" evidence="1">
    <location>
        <position position="51"/>
    </location>
    <ligand>
        <name>S-adenosyl-L-methionine</name>
        <dbReference type="ChEBI" id="CHEBI:59789"/>
    </ligand>
</feature>
<feature type="binding site" evidence="1">
    <location>
        <position position="69"/>
    </location>
    <ligand>
        <name>S-adenosyl-L-methionine</name>
        <dbReference type="ChEBI" id="CHEBI:59789"/>
    </ligand>
</feature>
<feature type="binding site" evidence="1">
    <location>
        <position position="87"/>
    </location>
    <ligand>
        <name>S-adenosyl-L-methionine</name>
        <dbReference type="ChEBI" id="CHEBI:59789"/>
    </ligand>
</feature>
<feature type="binding site" evidence="1">
    <location>
        <position position="111"/>
    </location>
    <ligand>
        <name>S-adenosyl-L-methionine</name>
        <dbReference type="ChEBI" id="CHEBI:59789"/>
    </ligand>
</feature>
<gene>
    <name evidence="1" type="primary">rlmE</name>
    <name evidence="1" type="synonym">ftsJ</name>
    <name evidence="1" type="synonym">rrmJ</name>
    <name type="ordered locus">DVU_2260</name>
</gene>
<organism>
    <name type="scientific">Nitratidesulfovibrio vulgaris (strain ATCC 29579 / DSM 644 / CCUG 34227 / NCIMB 8303 / VKM B-1760 / Hildenborough)</name>
    <name type="common">Desulfovibrio vulgaris</name>
    <dbReference type="NCBI Taxonomy" id="882"/>
    <lineage>
        <taxon>Bacteria</taxon>
        <taxon>Pseudomonadati</taxon>
        <taxon>Thermodesulfobacteriota</taxon>
        <taxon>Desulfovibrionia</taxon>
        <taxon>Desulfovibrionales</taxon>
        <taxon>Desulfovibrionaceae</taxon>
        <taxon>Nitratidesulfovibrio</taxon>
    </lineage>
</organism>
<sequence>MKKYRDHYFLKAKQENYPARSVYKLKEIDNRFKIFRQGMKVLDLGAAPGSWSLGAAEKVGPRGRVLACDLQETDTVFPDNVTFMQENVFERSEAFENLLDEIAPFDVVISDMAPRTTGTRFTDQARSLELCLEALAVADRCLIKGGSFVVKIFMGPDVQELVQAMRQRFSAVKSFKPKSSRAESKETFYVCLGYRGVETSDTDK</sequence>
<name>RLME_NITV2</name>
<keyword id="KW-0963">Cytoplasm</keyword>
<keyword id="KW-0489">Methyltransferase</keyword>
<keyword id="KW-1185">Reference proteome</keyword>
<keyword id="KW-0698">rRNA processing</keyword>
<keyword id="KW-0949">S-adenosyl-L-methionine</keyword>
<keyword id="KW-0808">Transferase</keyword>
<evidence type="ECO:0000255" key="1">
    <source>
        <dbReference type="HAMAP-Rule" id="MF_01547"/>
    </source>
</evidence>
<reference key="1">
    <citation type="journal article" date="2004" name="Nat. Biotechnol.">
        <title>The genome sequence of the anaerobic, sulfate-reducing bacterium Desulfovibrio vulgaris Hildenborough.</title>
        <authorList>
            <person name="Heidelberg J.F."/>
            <person name="Seshadri R."/>
            <person name="Haveman S.A."/>
            <person name="Hemme C.L."/>
            <person name="Paulsen I.T."/>
            <person name="Kolonay J.F."/>
            <person name="Eisen J.A."/>
            <person name="Ward N.L."/>
            <person name="Methe B.A."/>
            <person name="Brinkac L.M."/>
            <person name="Daugherty S.C."/>
            <person name="DeBoy R.T."/>
            <person name="Dodson R.J."/>
            <person name="Durkin A.S."/>
            <person name="Madupu R."/>
            <person name="Nelson W.C."/>
            <person name="Sullivan S.A."/>
            <person name="Fouts D.E."/>
            <person name="Haft D.H."/>
            <person name="Selengut J."/>
            <person name="Peterson J.D."/>
            <person name="Davidsen T.M."/>
            <person name="Zafar N."/>
            <person name="Zhou L."/>
            <person name="Radune D."/>
            <person name="Dimitrov G."/>
            <person name="Hance M."/>
            <person name="Tran K."/>
            <person name="Khouri H.M."/>
            <person name="Gill J."/>
            <person name="Utterback T.R."/>
            <person name="Feldblyum T.V."/>
            <person name="Wall J.D."/>
            <person name="Voordouw G."/>
            <person name="Fraser C.M."/>
        </authorList>
    </citation>
    <scope>NUCLEOTIDE SEQUENCE [LARGE SCALE GENOMIC DNA]</scope>
    <source>
        <strain>ATCC 29579 / DSM 644 / CCUG 34227 / NCIMB 8303 / VKM B-1760 / Hildenborough</strain>
    </source>
</reference>
<protein>
    <recommendedName>
        <fullName evidence="1">Ribosomal RNA large subunit methyltransferase E</fullName>
        <ecNumber evidence="1">2.1.1.166</ecNumber>
    </recommendedName>
    <alternativeName>
        <fullName evidence="1">23S rRNA Um2552 methyltransferase</fullName>
    </alternativeName>
    <alternativeName>
        <fullName evidence="1">rRNA (uridine-2'-O-)-methyltransferase</fullName>
    </alternativeName>
</protein>
<dbReference type="EC" id="2.1.1.166" evidence="1"/>
<dbReference type="EMBL" id="AE017285">
    <property type="protein sequence ID" value="AAS96733.1"/>
    <property type="molecule type" value="Genomic_DNA"/>
</dbReference>
<dbReference type="RefSeq" id="WP_010939535.1">
    <property type="nucleotide sequence ID" value="NC_002937.3"/>
</dbReference>
<dbReference type="RefSeq" id="YP_011473.1">
    <property type="nucleotide sequence ID" value="NC_002937.3"/>
</dbReference>
<dbReference type="SMR" id="Q729T9"/>
<dbReference type="STRING" id="882.DVU_2260"/>
<dbReference type="PaxDb" id="882-DVU_2260"/>
<dbReference type="EnsemblBacteria" id="AAS96733">
    <property type="protein sequence ID" value="AAS96733"/>
    <property type="gene ID" value="DVU_2260"/>
</dbReference>
<dbReference type="KEGG" id="dvu:DVU_2260"/>
<dbReference type="PATRIC" id="fig|882.5.peg.2053"/>
<dbReference type="eggNOG" id="COG0293">
    <property type="taxonomic scope" value="Bacteria"/>
</dbReference>
<dbReference type="HOGENOM" id="CLU_009422_4_0_7"/>
<dbReference type="OrthoDB" id="9790080at2"/>
<dbReference type="PhylomeDB" id="Q729T9"/>
<dbReference type="Proteomes" id="UP000002194">
    <property type="component" value="Chromosome"/>
</dbReference>
<dbReference type="GO" id="GO:0005737">
    <property type="term" value="C:cytoplasm"/>
    <property type="evidence" value="ECO:0007669"/>
    <property type="project" value="UniProtKB-SubCell"/>
</dbReference>
<dbReference type="GO" id="GO:0008650">
    <property type="term" value="F:rRNA (uridine-2'-O-)-methyltransferase activity"/>
    <property type="evidence" value="ECO:0007669"/>
    <property type="project" value="UniProtKB-UniRule"/>
</dbReference>
<dbReference type="Gene3D" id="3.40.50.150">
    <property type="entry name" value="Vaccinia Virus protein VP39"/>
    <property type="match status" value="1"/>
</dbReference>
<dbReference type="HAMAP" id="MF_01547">
    <property type="entry name" value="RNA_methyltr_E"/>
    <property type="match status" value="1"/>
</dbReference>
<dbReference type="InterPro" id="IPR050082">
    <property type="entry name" value="RNA_methyltr_RlmE"/>
</dbReference>
<dbReference type="InterPro" id="IPR002877">
    <property type="entry name" value="RNA_MeTrfase_FtsJ_dom"/>
</dbReference>
<dbReference type="InterPro" id="IPR015507">
    <property type="entry name" value="rRNA-MeTfrase_E"/>
</dbReference>
<dbReference type="InterPro" id="IPR029063">
    <property type="entry name" value="SAM-dependent_MTases_sf"/>
</dbReference>
<dbReference type="PANTHER" id="PTHR10920">
    <property type="entry name" value="RIBOSOMAL RNA METHYLTRANSFERASE"/>
    <property type="match status" value="1"/>
</dbReference>
<dbReference type="PANTHER" id="PTHR10920:SF18">
    <property type="entry name" value="RRNA METHYLTRANSFERASE 2, MITOCHONDRIAL"/>
    <property type="match status" value="1"/>
</dbReference>
<dbReference type="Pfam" id="PF01728">
    <property type="entry name" value="FtsJ"/>
    <property type="match status" value="1"/>
</dbReference>
<dbReference type="PIRSF" id="PIRSF005461">
    <property type="entry name" value="23S_rRNA_mtase"/>
    <property type="match status" value="1"/>
</dbReference>
<dbReference type="SUPFAM" id="SSF53335">
    <property type="entry name" value="S-adenosyl-L-methionine-dependent methyltransferases"/>
    <property type="match status" value="1"/>
</dbReference>
<comment type="function">
    <text evidence="1">Specifically methylates the uridine in position 2552 of 23S rRNA at the 2'-O position of the ribose in the fully assembled 50S ribosomal subunit.</text>
</comment>
<comment type="catalytic activity">
    <reaction evidence="1">
        <text>uridine(2552) in 23S rRNA + S-adenosyl-L-methionine = 2'-O-methyluridine(2552) in 23S rRNA + S-adenosyl-L-homocysteine + H(+)</text>
        <dbReference type="Rhea" id="RHEA:42720"/>
        <dbReference type="Rhea" id="RHEA-COMP:10202"/>
        <dbReference type="Rhea" id="RHEA-COMP:10203"/>
        <dbReference type="ChEBI" id="CHEBI:15378"/>
        <dbReference type="ChEBI" id="CHEBI:57856"/>
        <dbReference type="ChEBI" id="CHEBI:59789"/>
        <dbReference type="ChEBI" id="CHEBI:65315"/>
        <dbReference type="ChEBI" id="CHEBI:74478"/>
        <dbReference type="EC" id="2.1.1.166"/>
    </reaction>
</comment>
<comment type="subcellular location">
    <subcellularLocation>
        <location evidence="1">Cytoplasm</location>
    </subcellularLocation>
</comment>
<comment type="similarity">
    <text evidence="1">Belongs to the class I-like SAM-binding methyltransferase superfamily. RNA methyltransferase RlmE family.</text>
</comment>